<sequence>MPFKQPLGERDAANRVAPTFIRPLADKRAVVGETIILECQLEGHPDPAIKWLKDGHNVSMCPDYRIEEDGLKHRLVIPQVQAADSGRFTAQASNSAGTKQSTCILICAPAPTPVPGAKSAVASPAPPQTPVGPSAPIFLKELRHQPLKPGAGVTFEGRVIAVPPPNIEWMKNGKPLQNYRAKIEHDQKTGIISLIIPQMFNDDAGEYTIKATNVHGEAISGAQLLPREQYDRWFSNEQTRLTKDRKQGLLSQTLRPSSVAQKQMQKQGYDTDQGSVDMHWTISESETEPELSALDARGVGTKPIIRTPLRGLRLTEGTDAILQANIVGNPKPRIQWLFNGRPLQVSGPRMQMTYKGSMAVLKISMVTTEEAGDYTVASENRFGKVESSARIEVYPLSVPDERRKENQLREQQERDRQQQQQALVEASLARERQRDAENRRIREEQDRLRVLFEREKAERERLEEERRQLEHEKRLRQQQQQQLFEREKSEKEERARLEEERRRLEHEKHLRQQQQTQPYNLHYQQHHQPHQAWQDLDLVRRPQYASDEYQEPHYAQIRPHQQQQQHYQQQQQSPRQEVTHQNLYEQHRRQQQLIREQQLYQHQHQQHQQQQQQPQEQQQQRFHHFNQYQQHIREQHQNTMPVFRQQQPTQVTNGGIKAANGSAKTANGSANGSANGSAVHAANGGPSSQQARGHEHGAALVNARPPQFLVHPQSVAAKAFETVTFSAKVVGTPTPSLTWQKSDGTVIQSGGKYKIENGPDGSGRLIIEKVDAHDADMYMLVARNDGGSFQSRFSLNVLQAKSPEAPEFTGKFQSTTLYDGDSVKLYCKAAGEGVSFKWFKDNEPISSGGSYAVDNKGNETTLHINNATMKEGGWYRCDATNKHGTTTLKGRVVVNSRQKFNGPAHREMITLRKVDKVERSRTPVNQLQDVSASKSSPKFEGSLQSQQLVEGQSARLEIKYTPVEDPNLRIAWLLNGKGILASSRIVTFTDFGIAALEINPVNVFDQGEYTVVAVNPLGEARVSANIAVIGHGSFIQQQQSGSQFGGTAYQSKGAQAPAGTHLDLPNFHSDLRSQEVFEGQQIHLETKLTPINDPDLRVVWLLDGNELPSNDKYRQTLSHGFASLDIPQTSSNDSGLYSCRAFNKLGESENQATIIIVPKSDLQQFEQHRQLDVEDVREIQFAHSSQDLTPKFLSQIQPFHCEQELGRSFFEARIQPINDPTLRVSWLKDGQPLPNANRIQIFQNFGVVSLSLHPTYPEDAGVYTCVLFNSHGQAQSSAELTTVWIDTLQLDSKHADSLPIIGYLDSHQIHIGPQSVERPEEFNSLEAPKFARELAGKIEVMENERVHFEARILPANDVKMTVEWYHNGNPLPAAHRFHPMFDFGYVALDLLYAYPQDSGTYTLVARNELGEARSNVELVVGTEKVLYLEPHHPEGLERIKELEQDRRQGIAEVEDRTCDAAPKFLNDLPDIQLNEHENIHVDLRATPVNDPTMVIEWFVNGRPLLTGSRVKTLNEFGFIALDIKGAIAEDSGTYSVRASNLLGEAIRQCVITVTPAGQILSDTQHQESLGKINYLENLNKYGRVEIEDKGPQEPPTFVVPLQADLGDVEEGEPIHLECQVNPINDNSLKIIWLRDGQSLPHGHRFRTFYDFGFVSLDILGFYAQDAGTYTCRAENSLGQAETVATIRCAPKDAILGAVQHPRSYARIQEIEAPKPAPQEVPDLPHQPPAFVKQLGPAIQCMEGDNVYLEAQVTPTDDNSLTYEWLVNGQPLMKAHRFVLSQDFGYIALNILYCYPEDNGTYTLVVRNRAGEAQSTVDINCGHTGGNFTDSFHPNSLHRIAELETPIQRAEPLPDKEKEVPTIAKPLPATIDSVHESQTLHLEAQVTPIDDNTLRYEWLFNGNPLKASSRYRVLNDFGFVSLDIDYIIAEDSGKYTLVVYNSAGRAETSCEFQVDRLKSILSDTAHPESLRRIREMEQLQPAKPSDDDAAAQPPVFTQQLTGPTEPLKEGQSVHMDCVVQPINDPSLRIEWFHDGRPLMFGSRIRTIHDFGYVGLEFLHIHPEDTGTYTCKATNLIGEATTDIFLECKPRRNIYLDTHHESSWQKIQEIENRVDEREPTPELTFQPPTFTENLADKEDAQEGQSIRLECRLIPVNDPTMRVTWTRNGQPLPEASRFMPARNFDYVNLDILALYGEDSGVYTCKAVSAFGEAATSCTVKCAAGKSLLLDTMHDASWKRVQEIENREKLEAVDAEPEKTAPKFVTQLNSSLGELQEGVPIHLEAQVEPTNDNQLTVQWFHNGQPLANGHRFRTRHDFGYVALDILYAFAQDTGEWACVARNSLGEAQTIANFTVLPRGTIYTDSQHPESWQKIQVLEAPRAAAPEKPDAEHDAPQFIEPLDSIDRMEFQSAHFQTKVTPQTDPNLRIQWFKDGQPLMNSNRFKLTTDFGYISLDIAHTVPEDSGVYSVKASNAKGDAEVQAQLTVTGNAVILGDTQHEQSWQKIQLIEAPRAPGEEEPDVKHGPPKFVTQLHSLDGVVEGQPSHFEAQFIPFSDPKTSVQWYLNGNPLSASSRRILRNDFGLVSLDLQYTLGEDAGEYSVVVKNSEGEDRTSGQLSCTTRAAILGDTQHEQSWQRIQEIEAPRAPGAEPEGPVYEKPSFVQPLQSVGDLPEGSVALLEARLVPVNDPNLRVQWFYNDQPLMESNWISTSNDFGCVSLRIAPVYARHTGVYSCKAWNDSGNAVTSANVGVQGSEGLLLDTSHPASLQKIQELEAIDKYARLDAPEREYEKPQWVQGFENYENVGEGQTVTLHGLVEPSGDPHLRLEWLLNGTPLRNANRFRQEYEFGNAILTIVHVLPHDSGVYTCRAWNTQGEASTSATVTTAGYEKILYDSQHPVSWERIQELEAPKIVEEIEEIVQKEKPNFLTQLESAENVPEGVPLHLESTFQPARDPELKVVWQKNGQPLGASQLVQTKHELGWATLDISSANEDHNGVYTLTITNSEGEAVSTASIRVAGTGPILGNTRHEESWKRIQILEAPKEAEPEAPAPVYDHPAITTQIDDKECNEGDHVHFEALITPVNDPRLQVQWIRNGVPLAHGSKYAIQQDFGICTLDVAYTYPEDEGVYQLRIWNPEGEAVSSATLKCHGKDAILGDVQHQESWKRIQEIEAPKQKLEEADPEPKGPPRFIQQLTSPGSLVENQPAHFEATVEPVDDPTLTINWFLNGEPMSASSRVKMINDFGWVIMDIAQTEPRDSGEWKCVAKNAAGEAVSTATIEVQGKEVILQDSLQPQSLDRIRQIEAGKPAPEERPDQQFEAPAIVNALQVQGALEEGGSAHLQTQFTPVADPSIKVEWLKDGQPIFHSNRYKMVHDFGFAVLDILHLLKHDAGEYTFRVSNNSGEASTSTSFEVSESSGLILQPQNEQKAKAVEILEDNLRRRPEEIEQELKEATPVFIEPLSAPVETEEGGRAHFTARYEPVNDNQLQVQWYHDGRPLKNGSRIKTINSFGYVVLEISPTYPEDNGEYICRAVNRVGEAVTSTKLTCTPKEGIISATQLPERMANAGRRIAEIEAPRPAREDAPDADHGPPKFTSALAGPPELQEGQQAHLECQVTPVADPRLVIEWFHNGQPVNHTNRMKAIHDFGFVVLQLTPAEPQDSGTWTCRATNQHGSDEVSTELKVVGGGGVSYEWQSTAERKERITELEDWIHRPKEDLNLPAVDYPAPSFSQGLTDLGQLNEADATAFVCVLEPIGDPTLRVQWEHNGHPIPYSNRISCTNEFGVATLLIKHLIAADAGEYKCVATNVKGSATSVGKIAVESSTQIDAPQVVQQLVDSVENILEGDSIHLECRVTPINDPRLHVEWLRNGAPLPEASRFKPTFEFGFVSLDILYAYPEDNGDYELVVRNDKGEARSKTKITVLPRPSLDYTSQTHGNQQDSLESHFKQHSQAKLQLTANDIYNESDKRAPEFRTQLQNIGVLEGEFCRFETQVAPINDPYLKVEWFKDKKPVLLGHRFRSTLDFGFACLDLLYALPDDTGEYHCVATNRHGQTMISAKLACQGASHVITDSQMPQGLRVSNVKKDNKNIYWSEQGGAVQPKQKQAPQFTIPLRNLQVTENQPARFECAVTGYPRPKVTWFINGNQCLHGHRFKLNFDGLHYLTVSKSRISDAGEVVAIARNTEGETISTATLDIFQNDDFRQTKLRPANFKTSDELRERELQWQRDTLGSLGPAFEAAPKPDAQKLMHVERAQSPIEPMESQELIQKFTRPRDDNFYNKLSYVELQKPQFKGMELEEVNLKAGKVEKYQPPVEEMERVNLKAIPEKDQQEVGWERPDWAGQDGTSKLPGADEGRFKKLPTPAPELDVPARDQVKLKTAKPTRGKDLEAGEKVKLKTEKAKIKEIQQKPEQPKEEPIVHKDAVQLKTQQLPKTGIKGDHFTVDREKDLKETPAVVKPVIEETRISNKSISNVVHESSEYTSSYASNQSRLTYQAYREHKESTSSDVYLSVETADSFSQVQRLEYSPRSPRRERIIGFHMIRPQPTKIGQSKQAPPTISQQLKPLQGELGKAAKFVIEFAGAAPVKVTWLKDGKEIKSTFRTLITTTPTNSSLHIGRLENSHAGEYTVRLENAAGTVESLANLTVAPPTTQGKAPDFSARLNDLRIQQNGPAEFSCQIGGEPKPTIQWFKDGQPLPNDDRFQVVEEGGAYKLKFSNIISTDAGIYEIVAKNGVGEARCKARLNVNLQKTGKGAEEGPRYEAPRFTSQIQPIVVDEGKGAQFSAQFSGFPDPTIRWYRNNEPVKHADGYEISQSKGEAILRISAARNEDVAEYKVEASNPAGKASSVANLVLTPRSGRIAKSTISRGGSASYQSSDKAAADSPHFIAKLSDISARQGHTVKFSAEVDGNPEPTVQWQFKGKPISASNNVKISRDGKRAILELARVTPDSAGEYQIVIRNDKGAATSQAKLTLSR</sequence>
<proteinExistence type="evidence at protein level"/>
<protein>
    <recommendedName>
        <fullName evidence="10">Kettin homolog</fullName>
    </recommendedName>
</protein>
<gene>
    <name evidence="8 19" type="primary">ketn-1</name>
    <name evidence="9" type="synonym">let-330</name>
    <name evidence="19" type="synonym">MH44</name>
    <name evidence="19" type="synonym">pqn-43</name>
    <name evidence="19" type="ORF">F54E2.3</name>
</gene>
<dbReference type="EMBL" id="AB026846">
    <property type="protein sequence ID" value="BAA90302.2"/>
    <property type="status" value="ALT_SEQ"/>
    <property type="molecule type" value="mRNA"/>
</dbReference>
<dbReference type="EMBL" id="AY819766">
    <property type="protein sequence ID" value="AAV69856.1"/>
    <property type="molecule type" value="mRNA"/>
</dbReference>
<dbReference type="EMBL" id="BX284605">
    <property type="protein sequence ID" value="CCD71805.2"/>
    <property type="molecule type" value="Genomic_DNA"/>
</dbReference>
<dbReference type="EMBL" id="BX284605">
    <property type="protein sequence ID" value="CCD71806.2"/>
    <property type="molecule type" value="Genomic_DNA"/>
</dbReference>
<dbReference type="EMBL" id="BX284605">
    <property type="protein sequence ID" value="CCD71809.2"/>
    <property type="molecule type" value="Genomic_DNA"/>
</dbReference>
<dbReference type="EMBL" id="BX284605">
    <property type="protein sequence ID" value="CDK13527.1"/>
    <property type="molecule type" value="Genomic_DNA"/>
</dbReference>
<dbReference type="EMBL" id="BX284605">
    <property type="protein sequence ID" value="CDK13528.1"/>
    <property type="molecule type" value="Genomic_DNA"/>
</dbReference>
<dbReference type="EMBL" id="BX284605">
    <property type="protein sequence ID" value="CDK13529.1"/>
    <property type="molecule type" value="Genomic_DNA"/>
</dbReference>
<dbReference type="EMBL" id="BX284605">
    <property type="protein sequence ID" value="CDK13530.1"/>
    <property type="molecule type" value="Genomic_DNA"/>
</dbReference>
<dbReference type="EMBL" id="BX284605">
    <property type="protein sequence ID" value="CDK13531.1"/>
    <property type="molecule type" value="Genomic_DNA"/>
</dbReference>
<dbReference type="EMBL" id="BX284605">
    <property type="protein sequence ID" value="CDK13532.1"/>
    <property type="molecule type" value="Genomic_DNA"/>
</dbReference>
<dbReference type="EMBL" id="BX284605">
    <property type="protein sequence ID" value="CUR30035.1"/>
    <property type="molecule type" value="Genomic_DNA"/>
</dbReference>
<dbReference type="EMBL" id="BX284605">
    <property type="protein sequence ID" value="CUR30036.1"/>
    <property type="molecule type" value="Genomic_DNA"/>
</dbReference>
<dbReference type="RefSeq" id="NP_001023969.2">
    <property type="nucleotide sequence ID" value="NM_001028798.3"/>
</dbReference>
<dbReference type="RefSeq" id="NP_001023970.2">
    <property type="nucleotide sequence ID" value="NM_001028799.2"/>
</dbReference>
<dbReference type="RefSeq" id="NP_001023971.2">
    <property type="nucleotide sequence ID" value="NM_001028800.4"/>
</dbReference>
<dbReference type="RefSeq" id="NP_001294666.1">
    <molecule id="V6CLP5-5"/>
    <property type="nucleotide sequence ID" value="NM_001307737.5"/>
</dbReference>
<dbReference type="RefSeq" id="NP_001294667.1">
    <molecule id="V6CLP5-6"/>
    <property type="nucleotide sequence ID" value="NM_001307738.4"/>
</dbReference>
<dbReference type="RefSeq" id="NP_001294668.1">
    <molecule id="V6CLP5-1"/>
    <property type="nucleotide sequence ID" value="NM_001307739.4"/>
</dbReference>
<dbReference type="RefSeq" id="NP_001294669.1">
    <molecule id="V6CLP5-7"/>
    <property type="nucleotide sequence ID" value="NM_001307740.4"/>
</dbReference>
<dbReference type="RefSeq" id="NP_001294670.1">
    <property type="nucleotide sequence ID" value="NM_001307741.1"/>
</dbReference>
<dbReference type="RefSeq" id="NP_001294671.1">
    <property type="nucleotide sequence ID" value="NM_001307742.1"/>
</dbReference>
<dbReference type="RefSeq" id="NP_001303736.1">
    <molecule id="V6CLP5-10"/>
    <property type="nucleotide sequence ID" value="NM_001316807.3"/>
</dbReference>
<dbReference type="RefSeq" id="NP_001303737.1">
    <molecule id="V6CLP5-11"/>
    <property type="nucleotide sequence ID" value="NM_001316808.3"/>
</dbReference>
<dbReference type="RefSeq" id="NP_001364781.1">
    <molecule id="V6CLP5-3"/>
    <property type="nucleotide sequence ID" value="NM_001377590.2"/>
</dbReference>
<dbReference type="RefSeq" id="NP_001364782.1">
    <molecule id="V6CLP5-4"/>
    <property type="nucleotide sequence ID" value="NM_001377592.1"/>
</dbReference>
<dbReference type="RefSeq" id="NP_001364783.1">
    <molecule id="V6CLP5-2"/>
    <property type="nucleotide sequence ID" value="NM_001377593.1"/>
</dbReference>
<dbReference type="RefSeq" id="NP_001364827.1">
    <molecule id="V6CLP5-8"/>
    <property type="nucleotide sequence ID" value="NM_001377594.2"/>
</dbReference>
<dbReference type="RefSeq" id="NP_001364828.1">
    <molecule id="V6CLP5-9"/>
    <property type="nucleotide sequence ID" value="NM_001377591.2"/>
</dbReference>
<dbReference type="RefSeq" id="NP_503758.5">
    <property type="nucleotide sequence ID" value="NM_071357.9"/>
</dbReference>
<dbReference type="SMR" id="V6CLP5"/>
<dbReference type="FunCoup" id="V6CLP5">
    <property type="interactions" value="107"/>
</dbReference>
<dbReference type="IntAct" id="V6CLP5">
    <property type="interactions" value="1"/>
</dbReference>
<dbReference type="STRING" id="6239.F54E2.3g.1"/>
<dbReference type="PaxDb" id="6239-F54E2.3a"/>
<dbReference type="PeptideAtlas" id="V6CLP5"/>
<dbReference type="EnsemblMetazoa" id="F54E2.3a.1">
    <molecule id="V6CLP5-2"/>
    <property type="protein sequence ID" value="F54E2.3a.1"/>
    <property type="gene ID" value="WBGene00004130"/>
</dbReference>
<dbReference type="EnsemblMetazoa" id="F54E2.3c.1">
    <molecule id="V6CLP5-3"/>
    <property type="protein sequence ID" value="F54E2.3c.1"/>
    <property type="gene ID" value="WBGene00004130"/>
</dbReference>
<dbReference type="EnsemblMetazoa" id="F54E2.3d.1">
    <molecule id="V6CLP5-4"/>
    <property type="protein sequence ID" value="F54E2.3d.1"/>
    <property type="gene ID" value="WBGene00004130"/>
</dbReference>
<dbReference type="EnsemblMetazoa" id="F54E2.3e.1">
    <molecule id="V6CLP5-5"/>
    <property type="protein sequence ID" value="F54E2.3e.1"/>
    <property type="gene ID" value="WBGene00004130"/>
</dbReference>
<dbReference type="EnsemblMetazoa" id="F54E2.3f.1">
    <molecule id="V6CLP5-6"/>
    <property type="protein sequence ID" value="F54E2.3f.1"/>
    <property type="gene ID" value="WBGene00004130"/>
</dbReference>
<dbReference type="EnsemblMetazoa" id="F54E2.3g.1">
    <molecule id="V6CLP5-1"/>
    <property type="protein sequence ID" value="F54E2.3g.1"/>
    <property type="gene ID" value="WBGene00004130"/>
</dbReference>
<dbReference type="EnsemblMetazoa" id="F54E2.3h.1">
    <molecule id="V6CLP5-7"/>
    <property type="protein sequence ID" value="F54E2.3h.1"/>
    <property type="gene ID" value="WBGene00004130"/>
</dbReference>
<dbReference type="EnsemblMetazoa" id="F54E2.3i.1">
    <molecule id="V6CLP5-8"/>
    <property type="protein sequence ID" value="F54E2.3i.1"/>
    <property type="gene ID" value="WBGene00004130"/>
</dbReference>
<dbReference type="EnsemblMetazoa" id="F54E2.3j.1">
    <molecule id="V6CLP5-9"/>
    <property type="protein sequence ID" value="F54E2.3j.1"/>
    <property type="gene ID" value="WBGene00004130"/>
</dbReference>
<dbReference type="EnsemblMetazoa" id="F54E2.3k.1">
    <molecule id="V6CLP5-10"/>
    <property type="protein sequence ID" value="F54E2.3k.1"/>
    <property type="gene ID" value="WBGene00004130"/>
</dbReference>
<dbReference type="EnsemblMetazoa" id="F54E2.3l.1">
    <molecule id="V6CLP5-11"/>
    <property type="protein sequence ID" value="F54E2.3l.1"/>
    <property type="gene ID" value="WBGene00004130"/>
</dbReference>
<dbReference type="GeneID" id="178740"/>
<dbReference type="KEGG" id="cel:CELE_F54E2.3"/>
<dbReference type="UCSC" id="F54E2.3a">
    <property type="organism name" value="c. elegans"/>
</dbReference>
<dbReference type="AGR" id="WB:WBGene00004130"/>
<dbReference type="CTD" id="178740"/>
<dbReference type="WormBase" id="F54E2.3a">
    <molecule id="V6CLP5-2"/>
    <property type="protein sequence ID" value="CE49211"/>
    <property type="gene ID" value="WBGene00004130"/>
    <property type="gene designation" value="ketn-1"/>
</dbReference>
<dbReference type="WormBase" id="F54E2.3c">
    <molecule id="V6CLP5-3"/>
    <property type="protein sequence ID" value="CE49414"/>
    <property type="gene ID" value="WBGene00004130"/>
    <property type="gene designation" value="ketn-1"/>
</dbReference>
<dbReference type="WormBase" id="F54E2.3d">
    <molecule id="V6CLP5-4"/>
    <property type="protein sequence ID" value="CE49335"/>
    <property type="gene ID" value="WBGene00004130"/>
    <property type="gene designation" value="ketn-1"/>
</dbReference>
<dbReference type="WormBase" id="F54E2.3e">
    <molecule id="V6CLP5-5"/>
    <property type="protein sequence ID" value="CE38607"/>
    <property type="gene ID" value="WBGene00004130"/>
    <property type="gene designation" value="ketn-1"/>
</dbReference>
<dbReference type="WormBase" id="F54E2.3f">
    <molecule id="V6CLP5-6"/>
    <property type="protein sequence ID" value="CE49179"/>
    <property type="gene ID" value="WBGene00004130"/>
    <property type="gene designation" value="ketn-1"/>
</dbReference>
<dbReference type="WormBase" id="F54E2.3g">
    <molecule id="V6CLP5-1"/>
    <property type="protein sequence ID" value="CE49469"/>
    <property type="gene ID" value="WBGene00004130"/>
    <property type="gene designation" value="ketn-1"/>
</dbReference>
<dbReference type="WormBase" id="F54E2.3h">
    <molecule id="V6CLP5-7"/>
    <property type="protein sequence ID" value="CE49363"/>
    <property type="gene ID" value="WBGene00004130"/>
    <property type="gene designation" value="ketn-1"/>
</dbReference>
<dbReference type="WormBase" id="F54E2.3i">
    <molecule id="V6CLP5-8"/>
    <property type="protein sequence ID" value="CE49330"/>
    <property type="gene ID" value="WBGene00004130"/>
    <property type="gene designation" value="ketn-1"/>
</dbReference>
<dbReference type="WormBase" id="F54E2.3j">
    <molecule id="V6CLP5-9"/>
    <property type="protein sequence ID" value="CE49233"/>
    <property type="gene ID" value="WBGene00004130"/>
    <property type="gene designation" value="ketn-1"/>
</dbReference>
<dbReference type="WormBase" id="F54E2.3k">
    <molecule id="V6CLP5-10"/>
    <property type="protein sequence ID" value="CE51066"/>
    <property type="gene ID" value="WBGene00004130"/>
    <property type="gene designation" value="ketn-1"/>
</dbReference>
<dbReference type="WormBase" id="F54E2.3l">
    <molecule id="V6CLP5-11"/>
    <property type="protein sequence ID" value="CE51139"/>
    <property type="gene ID" value="WBGene00004130"/>
    <property type="gene designation" value="ketn-1"/>
</dbReference>
<dbReference type="eggNOG" id="KOG0613">
    <property type="taxonomic scope" value="Eukaryota"/>
</dbReference>
<dbReference type="GeneTree" id="ENSGT00940000169215"/>
<dbReference type="HOGENOM" id="CLU_000029_0_0_1"/>
<dbReference type="InParanoid" id="V6CLP5"/>
<dbReference type="OMA" id="PDIRWIK"/>
<dbReference type="OrthoDB" id="6612025at2759"/>
<dbReference type="PRO" id="PR:V6CLP5"/>
<dbReference type="Proteomes" id="UP000001940">
    <property type="component" value="Chromosome V"/>
</dbReference>
<dbReference type="Bgee" id="WBGene00004130">
    <property type="expression patterns" value="Expressed in pharyngeal muscle cell (C elegans) and 7 other cell types or tissues"/>
</dbReference>
<dbReference type="ExpressionAtlas" id="V6CLP5">
    <property type="expression patterns" value="baseline and differential"/>
</dbReference>
<dbReference type="GO" id="GO:0005856">
    <property type="term" value="C:cytoskeleton"/>
    <property type="evidence" value="ECO:0007669"/>
    <property type="project" value="UniProtKB-SubCell"/>
</dbReference>
<dbReference type="GO" id="GO:0031674">
    <property type="term" value="C:I band"/>
    <property type="evidence" value="ECO:0000314"/>
    <property type="project" value="WormBase"/>
</dbReference>
<dbReference type="GO" id="GO:0003779">
    <property type="term" value="F:actin binding"/>
    <property type="evidence" value="ECO:0007669"/>
    <property type="project" value="UniProtKB-KW"/>
</dbReference>
<dbReference type="CDD" id="cd00096">
    <property type="entry name" value="Ig"/>
    <property type="match status" value="6"/>
</dbReference>
<dbReference type="FunFam" id="2.60.40.10:FF:002009">
    <property type="match status" value="4"/>
</dbReference>
<dbReference type="FunFam" id="2.60.40.10:FF:001493">
    <property type="entry name" value="KETtiN (Drosophila actin-binding) homolog"/>
    <property type="match status" value="1"/>
</dbReference>
<dbReference type="FunFam" id="2.60.40.10:FF:001721">
    <property type="entry name" value="KETtiN (Drosophila actin-binding) homolog"/>
    <property type="match status" value="1"/>
</dbReference>
<dbReference type="FunFam" id="2.60.40.10:FF:001843">
    <property type="entry name" value="KETtiN (Drosophila actin-binding) homolog"/>
    <property type="match status" value="1"/>
</dbReference>
<dbReference type="FunFam" id="2.60.40.10:FF:001850">
    <property type="entry name" value="KETtiN (Drosophila actin-binding) homolog"/>
    <property type="match status" value="1"/>
</dbReference>
<dbReference type="FunFam" id="2.60.40.10:FF:001922">
    <property type="entry name" value="KETtiN (Drosophila actin-binding) homolog"/>
    <property type="match status" value="1"/>
</dbReference>
<dbReference type="FunFam" id="2.60.40.10:FF:001925">
    <property type="entry name" value="KETtiN (Drosophila actin-binding) homolog"/>
    <property type="match status" value="1"/>
</dbReference>
<dbReference type="FunFam" id="2.60.40.10:FF:001927">
    <property type="entry name" value="KETtiN (Drosophila actin-binding) homolog"/>
    <property type="match status" value="1"/>
</dbReference>
<dbReference type="FunFam" id="2.60.40.10:FF:001936">
    <property type="entry name" value="KETtiN (Drosophila actin-binding) homolog"/>
    <property type="match status" value="1"/>
</dbReference>
<dbReference type="FunFam" id="2.60.40.10:FF:001968">
    <property type="entry name" value="KETtiN (Drosophila actin-binding) homolog"/>
    <property type="match status" value="1"/>
</dbReference>
<dbReference type="FunFam" id="2.60.40.10:FF:001977">
    <property type="entry name" value="KETtiN (Drosophila actin-binding) homolog"/>
    <property type="match status" value="1"/>
</dbReference>
<dbReference type="FunFam" id="2.60.40.10:FF:002113">
    <property type="entry name" value="KETtiN (Drosophila actin-binding) homolog"/>
    <property type="match status" value="1"/>
</dbReference>
<dbReference type="FunFam" id="2.60.40.10:FF:002222">
    <property type="entry name" value="KETtiN (Drosophila actin-binding) homolog"/>
    <property type="match status" value="1"/>
</dbReference>
<dbReference type="FunFam" id="2.60.40.10:FF:002223">
    <property type="entry name" value="KETtiN (Drosophila actin-binding) homolog"/>
    <property type="match status" value="1"/>
</dbReference>
<dbReference type="FunFam" id="2.60.40.10:FF:002344">
    <property type="entry name" value="KETtiN (Drosophila actin-binding) homolog"/>
    <property type="match status" value="1"/>
</dbReference>
<dbReference type="FunFam" id="2.60.40.10:FF:002429">
    <property type="entry name" value="KETtiN (Drosophila actin-binding) homolog"/>
    <property type="match status" value="1"/>
</dbReference>
<dbReference type="FunFam" id="2.60.40.10:FF:002561">
    <property type="entry name" value="KETtiN (Drosophila actin-binding) homolog"/>
    <property type="match status" value="1"/>
</dbReference>
<dbReference type="FunFam" id="2.60.40.10:FF:000032">
    <property type="entry name" value="palladin isoform X1"/>
    <property type="match status" value="1"/>
</dbReference>
<dbReference type="FunFam" id="2.60.40.10:FF:000612">
    <property type="entry name" value="palladin isoform X1"/>
    <property type="match status" value="1"/>
</dbReference>
<dbReference type="FunFam" id="2.60.40.10:FF:000119">
    <property type="entry name" value="Sallimus, isoform P"/>
    <property type="match status" value="3"/>
</dbReference>
<dbReference type="FunFam" id="2.60.40.10:FF:000809">
    <property type="entry name" value="Sallimus, isoform Q"/>
    <property type="match status" value="1"/>
</dbReference>
<dbReference type="FunFam" id="2.60.40.10:FF:000697">
    <property type="entry name" value="titin isoform X1"/>
    <property type="match status" value="1"/>
</dbReference>
<dbReference type="FunFam" id="2.60.40.10:FF:000962">
    <property type="entry name" value="titin isoform X1"/>
    <property type="match status" value="6"/>
</dbReference>
<dbReference type="FunFam" id="2.60.40.10:FF:000714">
    <property type="entry name" value="Titin novex-3"/>
    <property type="match status" value="1"/>
</dbReference>
<dbReference type="Gene3D" id="2.60.40.10">
    <property type="entry name" value="Immunoglobulins"/>
    <property type="match status" value="34"/>
</dbReference>
<dbReference type="InterPro" id="IPR007110">
    <property type="entry name" value="Ig-like_dom"/>
</dbReference>
<dbReference type="InterPro" id="IPR036179">
    <property type="entry name" value="Ig-like_dom_sf"/>
</dbReference>
<dbReference type="InterPro" id="IPR013783">
    <property type="entry name" value="Ig-like_fold"/>
</dbReference>
<dbReference type="InterPro" id="IPR013098">
    <property type="entry name" value="Ig_I-set"/>
</dbReference>
<dbReference type="InterPro" id="IPR003599">
    <property type="entry name" value="Ig_sub"/>
</dbReference>
<dbReference type="InterPro" id="IPR003598">
    <property type="entry name" value="Ig_sub2"/>
</dbReference>
<dbReference type="PANTHER" id="PTHR47633">
    <property type="entry name" value="IMMUNOGLOBULIN"/>
    <property type="match status" value="1"/>
</dbReference>
<dbReference type="PANTHER" id="PTHR47633:SF4">
    <property type="entry name" value="MYOPALLADIN ISOFORM X1"/>
    <property type="match status" value="1"/>
</dbReference>
<dbReference type="Pfam" id="PF07679">
    <property type="entry name" value="I-set"/>
    <property type="match status" value="34"/>
</dbReference>
<dbReference type="SMART" id="SM00409">
    <property type="entry name" value="IG"/>
    <property type="match status" value="34"/>
</dbReference>
<dbReference type="SMART" id="SM00408">
    <property type="entry name" value="IGc2"/>
    <property type="match status" value="25"/>
</dbReference>
<dbReference type="SUPFAM" id="SSF48726">
    <property type="entry name" value="Immunoglobulin"/>
    <property type="match status" value="34"/>
</dbReference>
<dbReference type="PROSITE" id="PS50835">
    <property type="entry name" value="IG_LIKE"/>
    <property type="match status" value="32"/>
</dbReference>
<evidence type="ECO:0000255" key="1"/>
<evidence type="ECO:0000255" key="2">
    <source>
        <dbReference type="PROSITE-ProRule" id="PRU00114"/>
    </source>
</evidence>
<evidence type="ECO:0000256" key="3">
    <source>
        <dbReference type="SAM" id="MobiDB-lite"/>
    </source>
</evidence>
<evidence type="ECO:0000269" key="4">
    <source>
    </source>
</evidence>
<evidence type="ECO:0000269" key="5">
    <source>
    </source>
</evidence>
<evidence type="ECO:0000269" key="6">
    <source>
    </source>
</evidence>
<evidence type="ECO:0000269" key="7">
    <source>
    </source>
</evidence>
<evidence type="ECO:0000303" key="8">
    <source>
    </source>
</evidence>
<evidence type="ECO:0000303" key="9">
    <source>
    </source>
</evidence>
<evidence type="ECO:0000305" key="10"/>
<evidence type="ECO:0000312" key="11">
    <source>
        <dbReference type="EMBL" id="AAV69856.1"/>
    </source>
</evidence>
<evidence type="ECO:0000312" key="12">
    <source>
        <dbReference type="EMBL" id="BAA90302.2"/>
    </source>
</evidence>
<evidence type="ECO:0000312" key="13">
    <source>
        <dbReference type="Proteomes" id="UP000001940"/>
    </source>
</evidence>
<evidence type="ECO:0000312" key="14">
    <source>
        <dbReference type="WormBase" id="F54E2.3a"/>
    </source>
</evidence>
<evidence type="ECO:0000312" key="15">
    <source>
        <dbReference type="WormBase" id="F54E2.3c"/>
    </source>
</evidence>
<evidence type="ECO:0000312" key="16">
    <source>
        <dbReference type="WormBase" id="F54E2.3d"/>
    </source>
</evidence>
<evidence type="ECO:0000312" key="17">
    <source>
        <dbReference type="WormBase" id="F54E2.3e"/>
    </source>
</evidence>
<evidence type="ECO:0000312" key="18">
    <source>
        <dbReference type="WormBase" id="F54E2.3f"/>
    </source>
</evidence>
<evidence type="ECO:0000312" key="19">
    <source>
        <dbReference type="WormBase" id="F54E2.3g"/>
    </source>
</evidence>
<evidence type="ECO:0000312" key="20">
    <source>
        <dbReference type="WormBase" id="F54E2.3h"/>
    </source>
</evidence>
<evidence type="ECO:0000312" key="21">
    <source>
        <dbReference type="WormBase" id="F54E2.3i"/>
    </source>
</evidence>
<evidence type="ECO:0000312" key="22">
    <source>
        <dbReference type="WormBase" id="F54E2.3j"/>
    </source>
</evidence>
<evidence type="ECO:0000312" key="23">
    <source>
        <dbReference type="WormBase" id="F54E2.3k"/>
    </source>
</evidence>
<evidence type="ECO:0000312" key="24">
    <source>
        <dbReference type="WormBase" id="F54E2.3l"/>
    </source>
</evidence>
<feature type="chain" id="PRO_0000454211" description="Kettin homolog">
    <location>
        <begin position="1"/>
        <end position="4963"/>
    </location>
</feature>
<feature type="domain" description="Ig-like 1" evidence="2">
    <location>
        <begin position="18"/>
        <end position="105"/>
    </location>
</feature>
<feature type="domain" description="Ig-like 2" evidence="2">
    <location>
        <begin position="133"/>
        <end position="220"/>
    </location>
</feature>
<feature type="domain" description="Ig-like 3" evidence="2">
    <location>
        <begin position="303"/>
        <end position="392"/>
    </location>
</feature>
<feature type="domain" description="Ig-like 4" evidence="2">
    <location>
        <begin position="706"/>
        <end position="796"/>
    </location>
</feature>
<feature type="domain" description="Ig-like 5" evidence="2">
    <location>
        <begin position="806"/>
        <end position="893"/>
    </location>
</feature>
<feature type="domain" description="Ig-like 6" evidence="2">
    <location>
        <begin position="937"/>
        <end position="1027"/>
    </location>
</feature>
<feature type="domain" description="Ig-like 7" evidence="2">
    <location>
        <begin position="1065"/>
        <end position="1155"/>
    </location>
</feature>
<feature type="domain" description="Ig-like 8" evidence="2">
    <location>
        <begin position="1199"/>
        <end position="1281"/>
    </location>
</feature>
<feature type="domain" description="Ig-like 9" evidence="2">
    <location>
        <begin position="1462"/>
        <end position="1554"/>
    </location>
</feature>
<feature type="domain" description="Ig-like 10" evidence="2">
    <location>
        <begin position="1594"/>
        <end position="1687"/>
    </location>
</feature>
<feature type="domain" description="Ig-like 11" evidence="2">
    <location>
        <begin position="1728"/>
        <end position="1819"/>
    </location>
</feature>
<feature type="domain" description="Ig-like 12" evidence="2">
    <location>
        <begin position="1992"/>
        <end position="2085"/>
    </location>
</feature>
<feature type="domain" description="Ig-like 13" evidence="2">
    <location>
        <begin position="2126"/>
        <end position="2217"/>
    </location>
</feature>
<feature type="domain" description="Ig-like 14" evidence="2">
    <location>
        <begin position="2258"/>
        <end position="2350"/>
    </location>
</feature>
<feature type="domain" description="Ig-like 15" evidence="2">
    <location>
        <begin position="2391"/>
        <end position="2481"/>
    </location>
</feature>
<feature type="domain" description="Ig-like 16" evidence="2">
    <location>
        <begin position="2522"/>
        <end position="2613"/>
    </location>
</feature>
<feature type="domain" description="Ig-like 17" evidence="2">
    <location>
        <begin position="2654"/>
        <end position="2745"/>
    </location>
</feature>
<feature type="domain" description="Ig-like 18" evidence="2">
    <location>
        <begin position="2787"/>
        <end position="2878"/>
    </location>
</feature>
<feature type="domain" description="Ig-like 19" evidence="2">
    <location>
        <begin position="2919"/>
        <end position="3010"/>
    </location>
</feature>
<feature type="domain" description="Ig-like 20" evidence="2">
    <location>
        <begin position="3051"/>
        <end position="3141"/>
    </location>
</feature>
<feature type="domain" description="Ig-like 21" evidence="2">
    <location>
        <begin position="3182"/>
        <end position="3273"/>
    </location>
</feature>
<feature type="domain" description="Ig-like 22" evidence="2">
    <location>
        <begin position="3314"/>
        <end position="3407"/>
    </location>
</feature>
<feature type="domain" description="Ig-like 23" evidence="2">
    <location>
        <begin position="3448"/>
        <end position="3539"/>
    </location>
</feature>
<feature type="domain" description="Ig-like 24" evidence="2">
    <location>
        <begin position="3584"/>
        <end position="3677"/>
    </location>
</feature>
<feature type="domain" description="Ig-like 25" evidence="2">
    <location>
        <begin position="3720"/>
        <end position="3811"/>
    </location>
</feature>
<feature type="domain" description="Ig-like 26" evidence="2">
    <location>
        <begin position="3821"/>
        <end position="3913"/>
    </location>
</feature>
<feature type="domain" description="Ig-like 27" evidence="2">
    <location>
        <begin position="3962"/>
        <end position="4052"/>
    </location>
</feature>
<feature type="domain" description="Ig-like 28" evidence="2">
    <location>
        <begin position="4098"/>
        <end position="4185"/>
    </location>
</feature>
<feature type="domain" description="Ig-like 29" evidence="2">
    <location>
        <begin position="4546"/>
        <end position="4634"/>
    </location>
</feature>
<feature type="domain" description="Ig-like 30" evidence="2">
    <location>
        <begin position="4645"/>
        <end position="4733"/>
    </location>
</feature>
<feature type="domain" description="Ig-like 31" evidence="2">
    <location>
        <begin position="4752"/>
        <end position="4842"/>
    </location>
</feature>
<feature type="domain" description="Ig-like 32" evidence="2">
    <location>
        <begin position="4872"/>
        <end position="4960"/>
    </location>
</feature>
<feature type="region of interest" description="Disordered" evidence="3">
    <location>
        <begin position="396"/>
        <end position="420"/>
    </location>
</feature>
<feature type="region of interest" description="Disordered" evidence="3">
    <location>
        <begin position="466"/>
        <end position="501"/>
    </location>
</feature>
<feature type="region of interest" description="Disordered" evidence="3">
    <location>
        <begin position="557"/>
        <end position="578"/>
    </location>
</feature>
<feature type="region of interest" description="Disordered" evidence="3">
    <location>
        <begin position="598"/>
        <end position="622"/>
    </location>
</feature>
<feature type="region of interest" description="Disordered" evidence="3">
    <location>
        <begin position="652"/>
        <end position="696"/>
    </location>
</feature>
<feature type="region of interest" description="Disordered" evidence="3">
    <location>
        <begin position="3567"/>
        <end position="3590"/>
    </location>
</feature>
<feature type="region of interest" description="Required for F-actin binding" evidence="6">
    <location>
        <begin position="4193"/>
        <end position="4963"/>
    </location>
</feature>
<feature type="region of interest" description="Disordered" evidence="3">
    <location>
        <begin position="4319"/>
        <end position="4357"/>
    </location>
</feature>
<feature type="coiled-coil region" evidence="1">
    <location>
        <begin position="401"/>
        <end position="517"/>
    </location>
</feature>
<feature type="compositionally biased region" description="Basic and acidic residues" evidence="3">
    <location>
        <begin position="399"/>
        <end position="417"/>
    </location>
</feature>
<feature type="compositionally biased region" description="Basic and acidic residues" evidence="3">
    <location>
        <begin position="466"/>
        <end position="475"/>
    </location>
</feature>
<feature type="compositionally biased region" description="Basic and acidic residues" evidence="3">
    <location>
        <begin position="484"/>
        <end position="501"/>
    </location>
</feature>
<feature type="compositionally biased region" description="Low complexity" evidence="3">
    <location>
        <begin position="557"/>
        <end position="576"/>
    </location>
</feature>
<feature type="compositionally biased region" description="Low complexity" evidence="3">
    <location>
        <begin position="658"/>
        <end position="685"/>
    </location>
</feature>
<feature type="compositionally biased region" description="Basic and acidic residues" evidence="3">
    <location>
        <begin position="3567"/>
        <end position="3583"/>
    </location>
</feature>
<feature type="compositionally biased region" description="Basic and acidic residues" evidence="3">
    <location>
        <begin position="4319"/>
        <end position="4329"/>
    </location>
</feature>
<feature type="disulfide bond" evidence="2">
    <location>
        <begin position="827"/>
        <end position="877"/>
    </location>
</feature>
<feature type="disulfide bond" evidence="2">
    <location>
        <begin position="1201"/>
        <end position="1265"/>
    </location>
</feature>
<feature type="disulfide bond" evidence="2">
    <location>
        <begin position="1618"/>
        <end position="1671"/>
    </location>
</feature>
<feature type="disulfide bond" evidence="2">
    <location>
        <begin position="2016"/>
        <end position="2069"/>
    </location>
</feature>
<feature type="disulfide bond" evidence="2">
    <location>
        <begin position="2148"/>
        <end position="2201"/>
    </location>
</feature>
<feature type="disulfide bond" evidence="2">
    <location>
        <begin position="3606"/>
        <end position="3659"/>
    </location>
</feature>
<feature type="disulfide bond" evidence="2">
    <location>
        <begin position="3742"/>
        <end position="3795"/>
    </location>
</feature>
<feature type="splice variant" id="VSP_061259" description="In isoform l." evidence="10">
    <original>MPFKQPLGERDAANRVAPTFIRPLADKRAVVGETIILECQLEGHPDPAIKWLKDGHNVSMCPDYRIEEDGLKHRLVIPQVQAADSGRFTAQASNSAGTKQSTCILICAPAPTPVPGAKSAVASPAPPQTPVGPSAPIFLKELRHQPLKPGAGVTFEGRVIAVPPPNIEWMKNGKPLQNYRAKIEHDQKTGIISLIIPQMFNDDAGEYTIKATNVHGEAISGAQLLPREQYDRWFSNEQTRLTKDRKQGLLSQTLRPSSVAQKQMQKQGYDTDQGSVDMHWTISESETEPELSALDARGVGTKPIIRTPLRGLRLTEGTDAILQANIVGNPKPRIQWLFNGRPLQVSGPRMQMTYKGSMAVLKISMVTTEEAGDYTVASENRFGKVESSARIEVYPLSVPDERRKENQLREQQERDRQQQQQALVEASLARERQRDAENRRIREEQDRLRVLFEREKAERERLEEERRQLEHEKRLRQQQQQQLFEREKSEKEERARLEEERRRLEHEKHLRQQQQTQPYNLHYQQHHQPHQAWQDLDLVRRPQYASDEYQEPHYAQIRPHQQQQQHYQQQQQSPRQEVTHQNLYEQHRRQQQLIREQQLYQHQHQQHQQQQQQPQEQQQQRFHHFNQYQQHIREQHQNTMPVFRQQQPTQVTNGGIKAANGSAKTANGSANGSANGSAVHAANGGPSSQQARGHEHGAALVNARPPQFLVHPQSVAAKAFETVTFSAKVVGTPTPSLTWQKSDGTVIQSGGKYKIENGPDGSGRLIIEKVDAHDADMYMLVARNDGGSFQSRFSLNVLQAKSPEAPEFTGKFQSTTLYDGDSVKLYCKAAGEGVSFKWFKDNEPISSGGSYAVDNKGNETTLHINNATMKEGGWYRCDATNKHGTTTLKGRVVVNSRQKFNGPAHREMITLRKVDKVERSRTPVNQLQDVSASKSSPKFEGSLQSQQLVEGQSARLEIKYTPVEDPNLRIAWLLNGKGILASSRIVTFTDFGIAALEINPVNVFDQGEYTVVAVNPLGEARVSANIAVIGHGSFIQQQQSGSQFGGTAYQSKGAQAPAGTHLDLPNFHSDLRSQEVFEGQQIHLETKLTPINDPDLRVVWLLDGNELPSNDKYRQTLSHGFASLDIPQTSSNDSGLYSCRAFNKLGESENQATIIIVPKSDLQQFEQHRQLDVEDVREIQFAHSSQDLTPKFLSQIQPFHCEQELGRSFFEARIQPINDPTLRVSWLKDGQPLPNANRIQIFQNFGVVSLSLHPTYPEDAGVYTCVLFNSHGQAQSSAELTTVWIDTLQLDSKHADSLPIIGYLDSHQIHIGPQSVERPEEFNSLEAPKFARELAGKIEVMENERVHFEARILPANDVKMTVEWYHNGNPLPAAHRFHPMFDFGYVALDLLYAYPQDSGTYTLVARNELGEARSNVELVVGTEKVLYLEPHHPEGLERIKELEQDRRQGIAEVEDRTCDAAPKFLNDLPDIQLNEHENIHVDLRATPVNDPTMVIEWFVNGRPLLTGSRVKTLNEFGFIALDIKGAIAEDSGTYSVRASNLLGEAIRQCVITVTPAGQILSDTQHQESLGKINYLENLNKYGRVEIEDKGPQEPPTFVVPLQADLGDVEEGEPIHLECQVNPINDNSLKIIWLRDGQSLPHGHRFRTFYDFGFVSLDILGFYAQDAGTYTCRAENSLGQAETVATIRCAP</original>
    <variation>MSSNKYVFGVNYGPKPTVPPNSSSSLSGMSHILKSTESHSRKPATATRNNGMGLLNLSNSA</variation>
    <location>
        <begin position="1"/>
        <end position="1690"/>
    </location>
</feature>
<feature type="splice variant" id="VSP_061260" description="In isoform k." evidence="10">
    <location>
        <begin position="1"/>
        <end position="1492"/>
    </location>
</feature>
<feature type="splice variant" id="VSP_061261" description="In isoform a, isoform c, isoform d, isoform i and isoform j." evidence="10">
    <location>
        <begin position="1"/>
        <end position="639"/>
    </location>
</feature>
<feature type="splice variant" id="VSP_061262" description="In isoform h and isoform j." evidence="10">
    <location>
        <begin position="4417"/>
        <end position="4457"/>
    </location>
</feature>
<feature type="splice variant" id="VSP_061263" description="In isoform c and isoform f." evidence="10">
    <location>
        <begin position="4418"/>
        <end position="4532"/>
    </location>
</feature>
<feature type="splice variant" id="VSP_061264" description="In isoform a, isoform d, isoform e, isoform k and isoform l." evidence="10">
    <location>
        <begin position="4459"/>
        <end position="4532"/>
    </location>
</feature>
<feature type="splice variant" id="VSP_061265" description="In isoform d." evidence="10">
    <original>PR</original>
    <variation>RR</variation>
    <location>
        <begin position="4843"/>
        <end position="4844"/>
    </location>
</feature>
<feature type="splice variant" id="VSP_061266" description="In isoform d." evidence="10">
    <location>
        <begin position="4845"/>
        <end position="4963"/>
    </location>
</feature>
<feature type="mutagenesis site" description="In s1429; lethal at the L1 larval stage." evidence="7">
    <location>
        <begin position="1739"/>
        <end position="4963"/>
    </location>
</feature>
<feature type="mutagenesis site" description="In s1425; lethal at the L1 larval stage." evidence="7">
    <location>
        <begin position="3967"/>
        <end position="4963"/>
    </location>
</feature>
<reference evidence="12" key="1">
    <citation type="journal article" date="2000" name="J. Cell Biol.">
        <title>Requirements of Kettin, a giant muscle protein highly conserved in overall structure in evolution, for normal muscle function, viability, and flight activity of Drosophila.</title>
        <authorList>
            <person name="Hakeda S."/>
            <person name="Endo S."/>
            <person name="Saigo K."/>
        </authorList>
    </citation>
    <scope>NUCLEOTIDE SEQUENCE [MRNA]</scope>
</reference>
<reference evidence="11" key="2">
    <citation type="journal article" date="2006" name="Mol. Biol. Cell">
        <title>Caenorhabditis elegans kettin, a large immunoglobulin-like repeat protein, binds to filamentous actin and provides mechanical stability to the contractile apparatuses in body wall muscle.</title>
        <authorList>
            <person name="Ono K."/>
            <person name="Yu R."/>
            <person name="Mohri K."/>
            <person name="Ono S."/>
        </authorList>
    </citation>
    <scope>NUCLEOTIDE SEQUENCE [MRNA] (ISOFORM A)</scope>
    <scope>IDENTIFICATION BY MASS SPECTROMETRY</scope>
    <scope>FUNCTION</scope>
    <scope>INTERACTION WITH F-ACTIN</scope>
    <scope>TISSUE SPECIFICITY</scope>
    <scope>DEVELOPMENTAL STAGE</scope>
    <scope>DISRUPTION PHENOTYPE</scope>
</reference>
<reference evidence="13" key="3">
    <citation type="journal article" date="1998" name="Science">
        <title>Genome sequence of the nematode C. elegans: a platform for investigating biology.</title>
        <authorList>
            <consortium name="The C. elegans sequencing consortium"/>
        </authorList>
    </citation>
    <scope>NUCLEOTIDE SEQUENCE [LARGE SCALE GENOMIC DNA]</scope>
    <source>
        <strain evidence="13">Bristol N2</strain>
    </source>
</reference>
<reference evidence="10" key="4">
    <citation type="journal article" date="2000" name="J. Mol. Biol.">
        <title>Sequence and expression of the kettin gene in Drosophila melanogaster and Caenorhabditis elegans.</title>
        <authorList>
            <person name="Kolmerer B."/>
            <person name="Clayton J."/>
            <person name="Benes V."/>
            <person name="Allen T."/>
            <person name="Ferguson C."/>
            <person name="Leonard K."/>
            <person name="Weber U."/>
            <person name="Knekt M."/>
            <person name="Ansorge W."/>
            <person name="Labeit S."/>
            <person name="Bullard B."/>
        </authorList>
    </citation>
    <scope>SUBCELLULAR LOCATION</scope>
    <scope>TISSUE SPECIFICITY</scope>
    <scope>DEVELOPMENTAL STAGE</scope>
</reference>
<reference evidence="10" key="5">
    <citation type="journal article" date="2005" name="J. Muscle Res. Cell Motil.">
        <title>Molecular and biochemical characterization of kettin in Caenorhabditis elegans.</title>
        <authorList>
            <person name="Ono S."/>
            <person name="Mohri K."/>
            <person name="Ono K."/>
        </authorList>
    </citation>
    <scope>IDENTIFICATION BY MASS SPECTROMETRY</scope>
    <scope>SUBCELLULAR LOCATION</scope>
    <scope>TISSUE SPECIFICITY</scope>
</reference>
<reference evidence="10" key="6">
    <citation type="journal article" date="2020" name="FEBS J.">
        <title>Kettin, the large actin-binding protein with multiple immunoglobulin domains, is essential for sarcomeric actin assembly and larval development in Caenorhabditis elegans.</title>
        <authorList>
            <person name="Ono K."/>
            <person name="Qin Z."/>
            <person name="Johnsen R.C."/>
            <person name="Baillie D.L."/>
            <person name="Ono S."/>
        </authorList>
    </citation>
    <scope>FUNCTION</scope>
    <scope>SUBCELLULAR LOCATION</scope>
    <scope>DEVELOPMENTAL STAGE</scope>
    <scope>DISRUPTION PHENOTYPE</scope>
    <scope>MUTAGENESIS OF 1739-GLN--ARG-4963 AND 3967-GLN--ARG-4963</scope>
</reference>
<keyword id="KW-0009">Actin-binding</keyword>
<keyword id="KW-0025">Alternative splicing</keyword>
<keyword id="KW-0175">Coiled coil</keyword>
<keyword id="KW-0963">Cytoplasm</keyword>
<keyword id="KW-0206">Cytoskeleton</keyword>
<keyword id="KW-1015">Disulfide bond</keyword>
<keyword id="KW-0393">Immunoglobulin domain</keyword>
<keyword id="KW-0514">Muscle protein</keyword>
<keyword id="KW-1185">Reference proteome</keyword>
<keyword id="KW-0677">Repeat</keyword>
<comment type="function">
    <text evidence="6 7">Positively regulates actin filament organization and provides mechanical stability to the myofibrils during body wall muscle contraction (PubMed:16597697). Required for the organization of sarcomeric actin filaments and myosin protein myo-3 in striated body wall muscle cells (PubMed:31411810). Not required for assembly of dense bodies, which are a type of integrin-based adhesion structure that link the plasma membrane to thin filaments of myofibrils, in body wall muscle (PubMed:31411810). Not required for the atn-1 protein to localize to the dense bodies (PubMed:31411810).</text>
</comment>
<comment type="subunit">
    <text evidence="6">Interacts (via Ig-like domains) with F-actin.</text>
</comment>
<comment type="subcellular location">
    <subcellularLocation>
        <location evidence="4 5 7">Cytoplasm</location>
        <location evidence="4 5 7">Myofibril</location>
        <location evidence="4 5 7">Sarcomere</location>
    </subcellularLocation>
    <subcellularLocation>
        <location evidence="6">Cytoplasm</location>
        <location evidence="6">Cytoskeleton</location>
    </subcellularLocation>
    <text evidence="5 6 7">Localizes to sarcomeres in a punctate pattern (PubMed:31411810). Localizes to actin filaments (thin filaments) close to dense bodies in body wall muscle (PubMed:16597697). Co-localizes with actin filaments in embryos and adults (PubMed:16453162, PubMed:31411810).</text>
</comment>
<comment type="alternative products">
    <event type="alternative splicing"/>
    <isoform>
        <id>V6CLP5-1</id>
        <name evidence="19">g</name>
        <sequence type="displayed"/>
    </isoform>
    <isoform>
        <id>V6CLP5-2</id>
        <name evidence="14">a</name>
        <sequence type="described" ref="VSP_061261 VSP_061264"/>
    </isoform>
    <isoform>
        <id>V6CLP5-3</id>
        <name evidence="15">c</name>
        <sequence type="described" ref="VSP_061261 VSP_061263"/>
    </isoform>
    <isoform>
        <id>V6CLP5-4</id>
        <name evidence="16">d</name>
        <sequence type="described" ref="VSP_061261 VSP_061264 VSP_061265 VSP_061266"/>
    </isoform>
    <isoform>
        <id>V6CLP5-5</id>
        <name evidence="17">e</name>
        <sequence type="described" ref="VSP_061264"/>
    </isoform>
    <isoform>
        <id>V6CLP5-6</id>
        <name evidence="18">f</name>
        <sequence type="described" ref="VSP_061263"/>
    </isoform>
    <isoform>
        <id>V6CLP5-7</id>
        <name evidence="20">h</name>
        <sequence type="described" ref="VSP_061262"/>
    </isoform>
    <isoform>
        <id>V6CLP5-8</id>
        <name evidence="21">i</name>
        <sequence type="described" ref="VSP_061261"/>
    </isoform>
    <isoform>
        <id>V6CLP5-9</id>
        <name evidence="22">j</name>
        <sequence type="described" ref="VSP_061261 VSP_061262"/>
    </isoform>
    <isoform>
        <id>V6CLP5-10</id>
        <name evidence="23">k</name>
        <sequence type="described" ref="VSP_061260 VSP_061264"/>
    </isoform>
    <isoform>
        <id>V6CLP5-11</id>
        <name evidence="24">l</name>
        <sequence type="described" ref="VSP_061259 VSP_061264"/>
    </isoform>
</comment>
<comment type="tissue specificity">
    <text evidence="4 5 6">Expressed in the pharyngeal, body wall, and anal depressor muscles (PubMed:10669599, PubMed:16453162, PubMed:16597697). Expression in these muscles is higher in hermaphrodites than in males (PubMed:10669599). Expressed in the vulva and the myoepithelial sheath of the proximal ovary (PubMed:16597697). Expressed in the proximal gonad of males (PubMed:10669599). Not expressed in the dense bodies of the obliquely striated body wall muscle (PubMed:16453162).</text>
</comment>
<comment type="developmental stage">
    <text evidence="4 6 7">First expressed in body wall muscle at the comma stage of embryonic development and co-localizes with actin at the early stage of myofibril assembly (PubMed:16597697). At the two-fold stage, it is expressed in body wall muscles and in the pharynx (PubMed:16597697). At the two-fold embryonic stage, assembles into continuously organized myofibrils (PubMed:31411810). Highly expressed in the body wall muscle and pharynx in three-fold stage embryos (PubMed:16597697, PubMed:31411810). In larvae, highly expressed in the pharyngeal, body wall, and anal depressor muscles (PubMed:10669599, PubMed:31411810).</text>
</comment>
<comment type="disruption phenotype">
    <text evidence="6 7">Lethal during the larval stage of development with body elongation defects (PubMed:31411810). L1 stage larvae have severely disorganized actin filaments in the striated body wall muscle whereby actin filaments and tropomyosin assemble into thicker and fewer disorganized bundles (PubMed:31411810). Furthermore, the sarcomeric organization of actin and myo-3 is disrupted in body wall muscle cells (PubMed:31411810). RNAi-mediated knockdown reduces the brood size and results in a defective body wall muscle contractility (PubMed:16597697). RNAi-mediated knockdown results in small round actin aggregates or unusual accumulations of actin in body wall muscle in 23% of animals (PubMed:16597697). Larger actin aggregates form more frequently at the cell periphery in 94% of animals in response to tetramisole, an agonist of acetylcholine receptors (PubMed:16597697). RNAi-mediated knockdown enhances the disorganization of the actin filaments and results in larger actin aggregates in an atn-1 ok84 mutant background (PubMed:16597697).</text>
</comment>
<comment type="sequence caution" evidence="10">
    <conflict type="erroneous gene model prediction">
        <sequence resource="EMBL-CDS" id="BAA90302"/>
    </conflict>
</comment>
<accession>V6CLP5</accession>
<accession>A0A0M7RDU5</accession>
<accession>A0A0M9JJ85</accession>
<accession>H2L074</accession>
<accession>H2L075</accession>
<accession>H2L076</accession>
<accession>Q5PY59</accession>
<accession>Q8MXD8</accession>
<accession>Q9NL87</accession>
<accession>V6CJB8</accession>
<accession>V6CKH1</accession>
<accession>V6CLT3</accession>
<accession>V6CLU0</accession>
<accession>V6CLU5</accession>
<name>KETN1_CAEEL</name>
<organism evidence="13">
    <name type="scientific">Caenorhabditis elegans</name>
    <dbReference type="NCBI Taxonomy" id="6239"/>
    <lineage>
        <taxon>Eukaryota</taxon>
        <taxon>Metazoa</taxon>
        <taxon>Ecdysozoa</taxon>
        <taxon>Nematoda</taxon>
        <taxon>Chromadorea</taxon>
        <taxon>Rhabditida</taxon>
        <taxon>Rhabditina</taxon>
        <taxon>Rhabditomorpha</taxon>
        <taxon>Rhabditoidea</taxon>
        <taxon>Rhabditidae</taxon>
        <taxon>Peloderinae</taxon>
        <taxon>Caenorhabditis</taxon>
    </lineage>
</organism>